<name>COAX_LEGPA</name>
<gene>
    <name evidence="1" type="primary">coaX</name>
    <name type="ordered locus">lpp0973</name>
</gene>
<sequence length="256" mass="27744">MILCIDVGNSHIYGGVFDGDEIKLRFRHTSKVSTSDELGIFLKSVLRENNCSPETIRKIAICSVVPQVDYSLRSACVKYFSIDPFLLQAGVKTGLNIKYRNPVEVGADRIANAIAATHSFPNQNIIVIDFGTATTFCAISHKKAYLGGAILPGLRLSADALSKNTAKLPSVEIIKTESVVGRSTIESIQSGVYYGVLGACKELIQRIHHEAFNGDQILILATGGFASLFDKQGLYDHLVPDLVLQGIRLAAMMNTA</sequence>
<reference key="1">
    <citation type="journal article" date="2004" name="Nat. Genet.">
        <title>Evidence in the Legionella pneumophila genome for exploitation of host cell functions and high genome plasticity.</title>
        <authorList>
            <person name="Cazalet C."/>
            <person name="Rusniok C."/>
            <person name="Brueggemann H."/>
            <person name="Zidane N."/>
            <person name="Magnier A."/>
            <person name="Ma L."/>
            <person name="Tichit M."/>
            <person name="Jarraud S."/>
            <person name="Bouchier C."/>
            <person name="Vandenesch F."/>
            <person name="Kunst F."/>
            <person name="Etienne J."/>
            <person name="Glaser P."/>
            <person name="Buchrieser C."/>
        </authorList>
    </citation>
    <scope>NUCLEOTIDE SEQUENCE [LARGE SCALE GENOMIC DNA]</scope>
    <source>
        <strain>Paris</strain>
    </source>
</reference>
<evidence type="ECO:0000255" key="1">
    <source>
        <dbReference type="HAMAP-Rule" id="MF_01274"/>
    </source>
</evidence>
<organism>
    <name type="scientific">Legionella pneumophila (strain Paris)</name>
    <dbReference type="NCBI Taxonomy" id="297246"/>
    <lineage>
        <taxon>Bacteria</taxon>
        <taxon>Pseudomonadati</taxon>
        <taxon>Pseudomonadota</taxon>
        <taxon>Gammaproteobacteria</taxon>
        <taxon>Legionellales</taxon>
        <taxon>Legionellaceae</taxon>
        <taxon>Legionella</taxon>
    </lineage>
</organism>
<protein>
    <recommendedName>
        <fullName evidence="1">Type III pantothenate kinase</fullName>
        <ecNumber evidence="1">2.7.1.33</ecNumber>
    </recommendedName>
    <alternativeName>
        <fullName evidence="1">PanK-III</fullName>
    </alternativeName>
    <alternativeName>
        <fullName evidence="1">Pantothenic acid kinase</fullName>
    </alternativeName>
</protein>
<feature type="chain" id="PRO_0000267552" description="Type III pantothenate kinase">
    <location>
        <begin position="1"/>
        <end position="256"/>
    </location>
</feature>
<feature type="active site" description="Proton acceptor" evidence="1">
    <location>
        <position position="108"/>
    </location>
</feature>
<feature type="binding site" evidence="1">
    <location>
        <begin position="6"/>
        <end position="13"/>
    </location>
    <ligand>
        <name>ATP</name>
        <dbReference type="ChEBI" id="CHEBI:30616"/>
    </ligand>
</feature>
<feature type="binding site" evidence="1">
    <location>
        <position position="99"/>
    </location>
    <ligand>
        <name>substrate</name>
    </ligand>
</feature>
<feature type="binding site" evidence="1">
    <location>
        <begin position="106"/>
        <end position="109"/>
    </location>
    <ligand>
        <name>substrate</name>
    </ligand>
</feature>
<feature type="binding site" evidence="1">
    <location>
        <position position="129"/>
    </location>
    <ligand>
        <name>K(+)</name>
        <dbReference type="ChEBI" id="CHEBI:29103"/>
    </ligand>
</feature>
<feature type="binding site" evidence="1">
    <location>
        <position position="132"/>
    </location>
    <ligand>
        <name>ATP</name>
        <dbReference type="ChEBI" id="CHEBI:30616"/>
    </ligand>
</feature>
<feature type="binding site" evidence="1">
    <location>
        <position position="184"/>
    </location>
    <ligand>
        <name>substrate</name>
    </ligand>
</feature>
<comment type="function">
    <text evidence="1">Catalyzes the phosphorylation of pantothenate (Pan), the first step in CoA biosynthesis.</text>
</comment>
<comment type="catalytic activity">
    <reaction evidence="1">
        <text>(R)-pantothenate + ATP = (R)-4'-phosphopantothenate + ADP + H(+)</text>
        <dbReference type="Rhea" id="RHEA:16373"/>
        <dbReference type="ChEBI" id="CHEBI:10986"/>
        <dbReference type="ChEBI" id="CHEBI:15378"/>
        <dbReference type="ChEBI" id="CHEBI:29032"/>
        <dbReference type="ChEBI" id="CHEBI:30616"/>
        <dbReference type="ChEBI" id="CHEBI:456216"/>
        <dbReference type="EC" id="2.7.1.33"/>
    </reaction>
</comment>
<comment type="cofactor">
    <cofactor evidence="1">
        <name>NH4(+)</name>
        <dbReference type="ChEBI" id="CHEBI:28938"/>
    </cofactor>
    <cofactor evidence="1">
        <name>K(+)</name>
        <dbReference type="ChEBI" id="CHEBI:29103"/>
    </cofactor>
    <text evidence="1">A monovalent cation. Ammonium or potassium.</text>
</comment>
<comment type="pathway">
    <text evidence="1">Cofactor biosynthesis; coenzyme A biosynthesis; CoA from (R)-pantothenate: step 1/5.</text>
</comment>
<comment type="subunit">
    <text evidence="1">Homodimer.</text>
</comment>
<comment type="subcellular location">
    <subcellularLocation>
        <location evidence="1">Cytoplasm</location>
    </subcellularLocation>
</comment>
<comment type="similarity">
    <text evidence="1">Belongs to the type III pantothenate kinase family.</text>
</comment>
<accession>Q5X6J2</accession>
<proteinExistence type="inferred from homology"/>
<keyword id="KW-0067">ATP-binding</keyword>
<keyword id="KW-0173">Coenzyme A biosynthesis</keyword>
<keyword id="KW-0963">Cytoplasm</keyword>
<keyword id="KW-0418">Kinase</keyword>
<keyword id="KW-0479">Metal-binding</keyword>
<keyword id="KW-0547">Nucleotide-binding</keyword>
<keyword id="KW-0630">Potassium</keyword>
<keyword id="KW-0808">Transferase</keyword>
<dbReference type="EC" id="2.7.1.33" evidence="1"/>
<dbReference type="EMBL" id="CR628336">
    <property type="protein sequence ID" value="CAH12124.1"/>
    <property type="molecule type" value="Genomic_DNA"/>
</dbReference>
<dbReference type="RefSeq" id="WP_010946646.1">
    <property type="nucleotide sequence ID" value="NC_006368.1"/>
</dbReference>
<dbReference type="SMR" id="Q5X6J2"/>
<dbReference type="KEGG" id="lpp:lpp0973"/>
<dbReference type="LegioList" id="lpp0973"/>
<dbReference type="HOGENOM" id="CLU_066627_1_0_6"/>
<dbReference type="UniPathway" id="UPA00241">
    <property type="reaction ID" value="UER00352"/>
</dbReference>
<dbReference type="GO" id="GO:0005737">
    <property type="term" value="C:cytoplasm"/>
    <property type="evidence" value="ECO:0007669"/>
    <property type="project" value="UniProtKB-SubCell"/>
</dbReference>
<dbReference type="GO" id="GO:0005524">
    <property type="term" value="F:ATP binding"/>
    <property type="evidence" value="ECO:0007669"/>
    <property type="project" value="UniProtKB-UniRule"/>
</dbReference>
<dbReference type="GO" id="GO:0046872">
    <property type="term" value="F:metal ion binding"/>
    <property type="evidence" value="ECO:0007669"/>
    <property type="project" value="UniProtKB-KW"/>
</dbReference>
<dbReference type="GO" id="GO:0004594">
    <property type="term" value="F:pantothenate kinase activity"/>
    <property type="evidence" value="ECO:0007669"/>
    <property type="project" value="UniProtKB-UniRule"/>
</dbReference>
<dbReference type="GO" id="GO:0015937">
    <property type="term" value="P:coenzyme A biosynthetic process"/>
    <property type="evidence" value="ECO:0007669"/>
    <property type="project" value="UniProtKB-UniRule"/>
</dbReference>
<dbReference type="CDD" id="cd24015">
    <property type="entry name" value="ASKHA_NBD_PanK-III"/>
    <property type="match status" value="1"/>
</dbReference>
<dbReference type="Gene3D" id="3.30.420.40">
    <property type="match status" value="2"/>
</dbReference>
<dbReference type="HAMAP" id="MF_01274">
    <property type="entry name" value="Pantothen_kinase_3"/>
    <property type="match status" value="1"/>
</dbReference>
<dbReference type="InterPro" id="IPR043129">
    <property type="entry name" value="ATPase_NBD"/>
</dbReference>
<dbReference type="InterPro" id="IPR004619">
    <property type="entry name" value="Type_III_PanK"/>
</dbReference>
<dbReference type="NCBIfam" id="TIGR00671">
    <property type="entry name" value="baf"/>
    <property type="match status" value="1"/>
</dbReference>
<dbReference type="NCBIfam" id="NF009855">
    <property type="entry name" value="PRK13321.1"/>
    <property type="match status" value="1"/>
</dbReference>
<dbReference type="PANTHER" id="PTHR34265">
    <property type="entry name" value="TYPE III PANTOTHENATE KINASE"/>
    <property type="match status" value="1"/>
</dbReference>
<dbReference type="PANTHER" id="PTHR34265:SF1">
    <property type="entry name" value="TYPE III PANTOTHENATE KINASE"/>
    <property type="match status" value="1"/>
</dbReference>
<dbReference type="Pfam" id="PF03309">
    <property type="entry name" value="Pan_kinase"/>
    <property type="match status" value="1"/>
</dbReference>
<dbReference type="SUPFAM" id="SSF53067">
    <property type="entry name" value="Actin-like ATPase domain"/>
    <property type="match status" value="2"/>
</dbReference>